<keyword id="KW-0238">DNA-binding</keyword>
<keyword id="KW-0408">Iron</keyword>
<keyword id="KW-0411">Iron-sulfur</keyword>
<keyword id="KW-0479">Metal-binding</keyword>
<keyword id="KW-0678">Repressor</keyword>
<keyword id="KW-0804">Transcription</keyword>
<keyword id="KW-0805">Transcription regulation</keyword>
<proteinExistence type="inferred from homology"/>
<comment type="function">
    <text evidence="1">May function as a transcriptional regulator that controls feoABC expression.</text>
</comment>
<comment type="similarity">
    <text evidence="1">Belongs to the FeoC family.</text>
</comment>
<gene>
    <name evidence="1" type="primary">feoC</name>
    <name type="ordered locus">Ent638_3823</name>
</gene>
<reference key="1">
    <citation type="journal article" date="2010" name="PLoS Genet.">
        <title>Genome sequence of the plant growth promoting endophytic bacterium Enterobacter sp. 638.</title>
        <authorList>
            <person name="Taghavi S."/>
            <person name="van der Lelie D."/>
            <person name="Hoffman A."/>
            <person name="Zhang Y.B."/>
            <person name="Walla M.D."/>
            <person name="Vangronsveld J."/>
            <person name="Newman L."/>
            <person name="Monchy S."/>
        </authorList>
    </citation>
    <scope>NUCLEOTIDE SEQUENCE [LARGE SCALE GENOMIC DNA]</scope>
    <source>
        <strain>638</strain>
    </source>
</reference>
<dbReference type="EMBL" id="CP000653">
    <property type="protein sequence ID" value="ABP62478.1"/>
    <property type="molecule type" value="Genomic_DNA"/>
</dbReference>
<dbReference type="RefSeq" id="WP_015960783.1">
    <property type="nucleotide sequence ID" value="NC_009436.1"/>
</dbReference>
<dbReference type="SMR" id="A4WFJ8"/>
<dbReference type="STRING" id="399742.Ent638_3823"/>
<dbReference type="KEGG" id="ent:Ent638_3823"/>
<dbReference type="eggNOG" id="ENOG50330S2">
    <property type="taxonomic scope" value="Bacteria"/>
</dbReference>
<dbReference type="HOGENOM" id="CLU_189182_0_0_6"/>
<dbReference type="OrthoDB" id="6903254at2"/>
<dbReference type="Proteomes" id="UP000000230">
    <property type="component" value="Chromosome"/>
</dbReference>
<dbReference type="GO" id="GO:0003677">
    <property type="term" value="F:DNA binding"/>
    <property type="evidence" value="ECO:0007669"/>
    <property type="project" value="UniProtKB-KW"/>
</dbReference>
<dbReference type="GO" id="GO:0005506">
    <property type="term" value="F:iron ion binding"/>
    <property type="evidence" value="ECO:0007669"/>
    <property type="project" value="UniProtKB-UniRule"/>
</dbReference>
<dbReference type="GO" id="GO:0051536">
    <property type="term" value="F:iron-sulfur cluster binding"/>
    <property type="evidence" value="ECO:0007669"/>
    <property type="project" value="UniProtKB-KW"/>
</dbReference>
<dbReference type="Gene3D" id="1.10.10.10">
    <property type="entry name" value="Winged helix-like DNA-binding domain superfamily/Winged helix DNA-binding domain"/>
    <property type="match status" value="1"/>
</dbReference>
<dbReference type="HAMAP" id="MF_01586">
    <property type="entry name" value="FeoC"/>
    <property type="match status" value="1"/>
</dbReference>
<dbReference type="InterPro" id="IPR023732">
    <property type="entry name" value="FeoC"/>
</dbReference>
<dbReference type="InterPro" id="IPR015102">
    <property type="entry name" value="Tscrpt_reg_HTH_FeoC"/>
</dbReference>
<dbReference type="InterPro" id="IPR036388">
    <property type="entry name" value="WH-like_DNA-bd_sf"/>
</dbReference>
<dbReference type="InterPro" id="IPR036390">
    <property type="entry name" value="WH_DNA-bd_sf"/>
</dbReference>
<dbReference type="NCBIfam" id="NF011960">
    <property type="entry name" value="PRK15431.1"/>
    <property type="match status" value="1"/>
</dbReference>
<dbReference type="Pfam" id="PF09012">
    <property type="entry name" value="FeoC"/>
    <property type="match status" value="1"/>
</dbReference>
<dbReference type="SUPFAM" id="SSF46785">
    <property type="entry name" value="Winged helix' DNA-binding domain"/>
    <property type="match status" value="1"/>
</dbReference>
<name>FEOC_ENT38</name>
<evidence type="ECO:0000255" key="1">
    <source>
        <dbReference type="HAMAP-Rule" id="MF_01586"/>
    </source>
</evidence>
<sequence length="78" mass="8719">MASMIEVRDLLALQGRMEAKQLSLSLHTPQPLIDAMLERMEAMGRAQRIQEDADGCLTGSCKSCPEGKACLKEWWALR</sequence>
<feature type="chain" id="PRO_1000069317" description="Probable [Fe-S]-dependent transcriptional repressor">
    <location>
        <begin position="1"/>
        <end position="78"/>
    </location>
</feature>
<feature type="binding site" evidence="1">
    <location>
        <position position="56"/>
    </location>
    <ligand>
        <name>iron-sulfur cluster</name>
        <dbReference type="ChEBI" id="CHEBI:30408"/>
    </ligand>
</feature>
<feature type="binding site" evidence="1">
    <location>
        <position position="61"/>
    </location>
    <ligand>
        <name>iron-sulfur cluster</name>
        <dbReference type="ChEBI" id="CHEBI:30408"/>
    </ligand>
</feature>
<feature type="binding site" evidence="1">
    <location>
        <position position="64"/>
    </location>
    <ligand>
        <name>iron-sulfur cluster</name>
        <dbReference type="ChEBI" id="CHEBI:30408"/>
    </ligand>
</feature>
<feature type="binding site" evidence="1">
    <location>
        <position position="70"/>
    </location>
    <ligand>
        <name>iron-sulfur cluster</name>
        <dbReference type="ChEBI" id="CHEBI:30408"/>
    </ligand>
</feature>
<protein>
    <recommendedName>
        <fullName evidence="1">Probable [Fe-S]-dependent transcriptional repressor</fullName>
    </recommendedName>
</protein>
<accession>A4WFJ8</accession>
<organism>
    <name type="scientific">Enterobacter sp. (strain 638)</name>
    <dbReference type="NCBI Taxonomy" id="399742"/>
    <lineage>
        <taxon>Bacteria</taxon>
        <taxon>Pseudomonadati</taxon>
        <taxon>Pseudomonadota</taxon>
        <taxon>Gammaproteobacteria</taxon>
        <taxon>Enterobacterales</taxon>
        <taxon>Enterobacteriaceae</taxon>
        <taxon>Enterobacter</taxon>
    </lineage>
</organism>